<proteinExistence type="inferred from homology"/>
<reference key="1">
    <citation type="journal article" date="2001" name="J. Bacteriol.">
        <title>Genome of the bacterium Streptococcus pneumoniae strain R6.</title>
        <authorList>
            <person name="Hoskins J."/>
            <person name="Alborn W.E. Jr."/>
            <person name="Arnold J."/>
            <person name="Blaszczak L.C."/>
            <person name="Burgett S."/>
            <person name="DeHoff B.S."/>
            <person name="Estrem S.T."/>
            <person name="Fritz L."/>
            <person name="Fu D.-J."/>
            <person name="Fuller W."/>
            <person name="Geringer C."/>
            <person name="Gilmour R."/>
            <person name="Glass J.S."/>
            <person name="Khoja H."/>
            <person name="Kraft A.R."/>
            <person name="Lagace R.E."/>
            <person name="LeBlanc D.J."/>
            <person name="Lee L.N."/>
            <person name="Lefkowitz E.J."/>
            <person name="Lu J."/>
            <person name="Matsushima P."/>
            <person name="McAhren S.M."/>
            <person name="McHenney M."/>
            <person name="McLeaster K."/>
            <person name="Mundy C.W."/>
            <person name="Nicas T.I."/>
            <person name="Norris F.H."/>
            <person name="O'Gara M."/>
            <person name="Peery R.B."/>
            <person name="Robertson G.T."/>
            <person name="Rockey P."/>
            <person name="Sun P.-M."/>
            <person name="Winkler M.E."/>
            <person name="Yang Y."/>
            <person name="Young-Bellido M."/>
            <person name="Zhao G."/>
            <person name="Zook C.A."/>
            <person name="Baltz R.H."/>
            <person name="Jaskunas S.R."/>
            <person name="Rosteck P.R. Jr."/>
            <person name="Skatrud P.L."/>
            <person name="Glass J.I."/>
        </authorList>
    </citation>
    <scope>NUCLEOTIDE SEQUENCE [LARGE SCALE GENOMIC DNA]</scope>
    <source>
        <strain>ATCC BAA-255 / R6</strain>
    </source>
</reference>
<sequence>MKKKLLAGAITLLSVATLAACSKGSEGADLISMKGDVITEHQFYEQVKNNPSAQQVLLNMTIQKVFEKQYGSELDDKEVDDTIAEEKKQYGENYQRVLSQAGMTLETRKAQIRTSKLVELAVKKVAEAELTDEAYKKAFDEYTPDVTAQIIRLNNEDKAKEVLEKAKAEGADFAQLAKDNSTDEKTKENGGEITFDSASTEVPEQVKKAAFALDVDGVSDVITATGTQAYSSQYYIVKLTKKTEKSSNIDDYKEKLKTVILTQKQNDSTFVQSIIGKELQAANIKVKDQAFQNIFTQYIGGGDSSSSSSTSNE</sequence>
<gene>
    <name evidence="1" type="primary">prsA</name>
    <name type="synonym">ppmA</name>
    <name type="ordered locus">spr0884</name>
</gene>
<keyword id="KW-1003">Cell membrane</keyword>
<keyword id="KW-0413">Isomerase</keyword>
<keyword id="KW-0449">Lipoprotein</keyword>
<keyword id="KW-0472">Membrane</keyword>
<keyword id="KW-0564">Palmitate</keyword>
<keyword id="KW-1185">Reference proteome</keyword>
<keyword id="KW-0697">Rotamase</keyword>
<keyword id="KW-0732">Signal</keyword>
<evidence type="ECO:0000255" key="1">
    <source>
        <dbReference type="HAMAP-Rule" id="MF_01145"/>
    </source>
</evidence>
<comment type="function">
    <text evidence="1">Plays a major role in protein secretion by helping the post-translocational extracellular folding of several secreted proteins.</text>
</comment>
<comment type="catalytic activity">
    <reaction evidence="1">
        <text>[protein]-peptidylproline (omega=180) = [protein]-peptidylproline (omega=0)</text>
        <dbReference type="Rhea" id="RHEA:16237"/>
        <dbReference type="Rhea" id="RHEA-COMP:10747"/>
        <dbReference type="Rhea" id="RHEA-COMP:10748"/>
        <dbReference type="ChEBI" id="CHEBI:83833"/>
        <dbReference type="ChEBI" id="CHEBI:83834"/>
        <dbReference type="EC" id="5.2.1.8"/>
    </reaction>
</comment>
<comment type="subcellular location">
    <subcellularLocation>
        <location evidence="1">Cell membrane</location>
        <topology evidence="1">Lipid-anchor</topology>
    </subcellularLocation>
</comment>
<comment type="similarity">
    <text evidence="1">Belongs to the PrsA family.</text>
</comment>
<accession>Q8DQ24</accession>
<organism>
    <name type="scientific">Streptococcus pneumoniae (strain ATCC BAA-255 / R6)</name>
    <dbReference type="NCBI Taxonomy" id="171101"/>
    <lineage>
        <taxon>Bacteria</taxon>
        <taxon>Bacillati</taxon>
        <taxon>Bacillota</taxon>
        <taxon>Bacilli</taxon>
        <taxon>Lactobacillales</taxon>
        <taxon>Streptococcaceae</taxon>
        <taxon>Streptococcus</taxon>
    </lineage>
</organism>
<dbReference type="EC" id="5.2.1.8" evidence="1"/>
<dbReference type="EMBL" id="AE007317">
    <property type="protein sequence ID" value="AAK99688.1"/>
    <property type="molecule type" value="Genomic_DNA"/>
</dbReference>
<dbReference type="PIR" id="D97982">
    <property type="entry name" value="D97982"/>
</dbReference>
<dbReference type="RefSeq" id="NP_358478.1">
    <property type="nucleotide sequence ID" value="NC_003098.1"/>
</dbReference>
<dbReference type="RefSeq" id="WP_000727935.1">
    <property type="nucleotide sequence ID" value="NC_003098.1"/>
</dbReference>
<dbReference type="SMR" id="Q8DQ24"/>
<dbReference type="STRING" id="171101.spr0884"/>
<dbReference type="KEGG" id="spr:spr0884"/>
<dbReference type="PATRIC" id="fig|171101.6.peg.971"/>
<dbReference type="eggNOG" id="COG0760">
    <property type="taxonomic scope" value="Bacteria"/>
</dbReference>
<dbReference type="HOGENOM" id="CLU_034646_6_0_9"/>
<dbReference type="Proteomes" id="UP000000586">
    <property type="component" value="Chromosome"/>
</dbReference>
<dbReference type="GO" id="GO:0005886">
    <property type="term" value="C:plasma membrane"/>
    <property type="evidence" value="ECO:0007669"/>
    <property type="project" value="UniProtKB-SubCell"/>
</dbReference>
<dbReference type="GO" id="GO:0003755">
    <property type="term" value="F:peptidyl-prolyl cis-trans isomerase activity"/>
    <property type="evidence" value="ECO:0007669"/>
    <property type="project" value="UniProtKB-UniRule"/>
</dbReference>
<dbReference type="GO" id="GO:0006457">
    <property type="term" value="P:protein folding"/>
    <property type="evidence" value="ECO:0007669"/>
    <property type="project" value="UniProtKB-UniRule"/>
</dbReference>
<dbReference type="Gene3D" id="3.10.50.40">
    <property type="match status" value="1"/>
</dbReference>
<dbReference type="HAMAP" id="MF_01145">
    <property type="entry name" value="Foldase_PrsA"/>
    <property type="match status" value="1"/>
</dbReference>
<dbReference type="InterPro" id="IPR023059">
    <property type="entry name" value="Foldase_PrsA"/>
</dbReference>
<dbReference type="InterPro" id="IPR046357">
    <property type="entry name" value="PPIase_dom_sf"/>
</dbReference>
<dbReference type="InterPro" id="IPR000297">
    <property type="entry name" value="PPIase_PpiC"/>
</dbReference>
<dbReference type="InterPro" id="IPR050245">
    <property type="entry name" value="PrsA_foldase"/>
</dbReference>
<dbReference type="InterPro" id="IPR027304">
    <property type="entry name" value="Trigger_fact/SurA_dom_sf"/>
</dbReference>
<dbReference type="NCBIfam" id="NF002361">
    <property type="entry name" value="PRK01326.1"/>
    <property type="match status" value="1"/>
</dbReference>
<dbReference type="PANTHER" id="PTHR47245:SF1">
    <property type="entry name" value="FOLDASE PROTEIN PRSA"/>
    <property type="match status" value="1"/>
</dbReference>
<dbReference type="PANTHER" id="PTHR47245">
    <property type="entry name" value="PEPTIDYLPROLYL ISOMERASE"/>
    <property type="match status" value="1"/>
</dbReference>
<dbReference type="Pfam" id="PF00639">
    <property type="entry name" value="Rotamase"/>
    <property type="match status" value="1"/>
</dbReference>
<dbReference type="SUPFAM" id="SSF54534">
    <property type="entry name" value="FKBP-like"/>
    <property type="match status" value="1"/>
</dbReference>
<dbReference type="SUPFAM" id="SSF109998">
    <property type="entry name" value="Triger factor/SurA peptide-binding domain-like"/>
    <property type="match status" value="1"/>
</dbReference>
<dbReference type="PROSITE" id="PS50198">
    <property type="entry name" value="PPIC_PPIASE_2"/>
    <property type="match status" value="1"/>
</dbReference>
<dbReference type="PROSITE" id="PS51257">
    <property type="entry name" value="PROKAR_LIPOPROTEIN"/>
    <property type="match status" value="1"/>
</dbReference>
<protein>
    <recommendedName>
        <fullName evidence="1">Foldase protein PrsA</fullName>
        <ecNumber evidence="1">5.2.1.8</ecNumber>
    </recommendedName>
</protein>
<name>PRSA_STRR6</name>
<feature type="signal peptide" evidence="1">
    <location>
        <begin position="1"/>
        <end position="20"/>
    </location>
</feature>
<feature type="chain" id="PRO_0000029328" description="Foldase protein PrsA">
    <location>
        <begin position="21"/>
        <end position="313"/>
    </location>
</feature>
<feature type="domain" description="PpiC" evidence="1">
    <location>
        <begin position="143"/>
        <end position="241"/>
    </location>
</feature>
<feature type="lipid moiety-binding region" description="N-palmitoyl cysteine" evidence="1">
    <location>
        <position position="21"/>
    </location>
</feature>
<feature type="lipid moiety-binding region" description="S-diacylglycerol cysteine" evidence="1">
    <location>
        <position position="21"/>
    </location>
</feature>